<name>Y6603_RHOOB</name>
<proteinExistence type="inferred from homology"/>
<feature type="chain" id="PRO_1000200159" description="UPF0102 protein ROP_66030">
    <location>
        <begin position="1"/>
        <end position="118"/>
    </location>
</feature>
<evidence type="ECO:0000255" key="1">
    <source>
        <dbReference type="HAMAP-Rule" id="MF_00048"/>
    </source>
</evidence>
<sequence>MAHNLALGAHGEDLAARYLTEAGMEIIDRNWRSRYGEVDLIAAEGDWLVFVEVKTRRGLGYGTPAEAVTFSKQRRIRLLAVEWLRESSRHWSRVRFDVVAIMIGHGPQPQIEHVRDAF</sequence>
<protein>
    <recommendedName>
        <fullName evidence="1">UPF0102 protein ROP_66030</fullName>
    </recommendedName>
</protein>
<dbReference type="EMBL" id="AP011115">
    <property type="protein sequence ID" value="BAH54850.1"/>
    <property type="molecule type" value="Genomic_DNA"/>
</dbReference>
<dbReference type="RefSeq" id="WP_015890290.1">
    <property type="nucleotide sequence ID" value="NC_012522.1"/>
</dbReference>
<dbReference type="SMR" id="C1B2T3"/>
<dbReference type="STRING" id="632772.ROP_66030"/>
<dbReference type="KEGG" id="rop:ROP_66030"/>
<dbReference type="PATRIC" id="fig|632772.20.peg.6889"/>
<dbReference type="HOGENOM" id="CLU_115353_2_3_11"/>
<dbReference type="OrthoDB" id="9794876at2"/>
<dbReference type="Proteomes" id="UP000002212">
    <property type="component" value="Chromosome"/>
</dbReference>
<dbReference type="GO" id="GO:0003676">
    <property type="term" value="F:nucleic acid binding"/>
    <property type="evidence" value="ECO:0007669"/>
    <property type="project" value="InterPro"/>
</dbReference>
<dbReference type="CDD" id="cd20736">
    <property type="entry name" value="PoNe_Nuclease"/>
    <property type="match status" value="1"/>
</dbReference>
<dbReference type="Gene3D" id="3.40.1350.10">
    <property type="match status" value="1"/>
</dbReference>
<dbReference type="HAMAP" id="MF_00048">
    <property type="entry name" value="UPF0102"/>
    <property type="match status" value="1"/>
</dbReference>
<dbReference type="InterPro" id="IPR011335">
    <property type="entry name" value="Restrct_endonuc-II-like"/>
</dbReference>
<dbReference type="InterPro" id="IPR011856">
    <property type="entry name" value="tRNA_endonuc-like_dom_sf"/>
</dbReference>
<dbReference type="InterPro" id="IPR003509">
    <property type="entry name" value="UPF0102_YraN-like"/>
</dbReference>
<dbReference type="NCBIfam" id="NF009150">
    <property type="entry name" value="PRK12497.1-3"/>
    <property type="match status" value="1"/>
</dbReference>
<dbReference type="NCBIfam" id="NF009154">
    <property type="entry name" value="PRK12497.3-3"/>
    <property type="match status" value="1"/>
</dbReference>
<dbReference type="NCBIfam" id="TIGR00252">
    <property type="entry name" value="YraN family protein"/>
    <property type="match status" value="1"/>
</dbReference>
<dbReference type="PANTHER" id="PTHR34039">
    <property type="entry name" value="UPF0102 PROTEIN YRAN"/>
    <property type="match status" value="1"/>
</dbReference>
<dbReference type="PANTHER" id="PTHR34039:SF1">
    <property type="entry name" value="UPF0102 PROTEIN YRAN"/>
    <property type="match status" value="1"/>
</dbReference>
<dbReference type="Pfam" id="PF02021">
    <property type="entry name" value="UPF0102"/>
    <property type="match status" value="1"/>
</dbReference>
<dbReference type="SUPFAM" id="SSF52980">
    <property type="entry name" value="Restriction endonuclease-like"/>
    <property type="match status" value="1"/>
</dbReference>
<comment type="similarity">
    <text evidence="1">Belongs to the UPF0102 family.</text>
</comment>
<accession>C1B2T3</accession>
<gene>
    <name type="ordered locus">ROP_66030</name>
</gene>
<reference key="1">
    <citation type="submission" date="2009-03" db="EMBL/GenBank/DDBJ databases">
        <title>Comparison of the complete genome sequences of Rhodococcus erythropolis PR4 and Rhodococcus opacus B4.</title>
        <authorList>
            <person name="Takarada H."/>
            <person name="Sekine M."/>
            <person name="Hosoyama A."/>
            <person name="Yamada R."/>
            <person name="Fujisawa T."/>
            <person name="Omata S."/>
            <person name="Shimizu A."/>
            <person name="Tsukatani N."/>
            <person name="Tanikawa S."/>
            <person name="Fujita N."/>
            <person name="Harayama S."/>
        </authorList>
    </citation>
    <scope>NUCLEOTIDE SEQUENCE [LARGE SCALE GENOMIC DNA]</scope>
    <source>
        <strain>B4</strain>
    </source>
</reference>
<organism>
    <name type="scientific">Rhodococcus opacus (strain B4)</name>
    <dbReference type="NCBI Taxonomy" id="632772"/>
    <lineage>
        <taxon>Bacteria</taxon>
        <taxon>Bacillati</taxon>
        <taxon>Actinomycetota</taxon>
        <taxon>Actinomycetes</taxon>
        <taxon>Mycobacteriales</taxon>
        <taxon>Nocardiaceae</taxon>
        <taxon>Rhodococcus</taxon>
    </lineage>
</organism>